<evidence type="ECO:0000255" key="1">
    <source>
        <dbReference type="HAMAP-Rule" id="MF_01615"/>
    </source>
</evidence>
<protein>
    <recommendedName>
        <fullName evidence="1">Pyridoxal 5'-phosphate synthase subunit PdxT</fullName>
        <ecNumber evidence="1">4.3.3.6</ecNumber>
    </recommendedName>
    <alternativeName>
        <fullName evidence="1">Pdx2</fullName>
    </alternativeName>
    <alternativeName>
        <fullName evidence="1">Pyridoxal 5'-phosphate synthase glutaminase subunit</fullName>
        <ecNumber evidence="1">3.5.1.2</ecNumber>
    </alternativeName>
</protein>
<keyword id="KW-0315">Glutamine amidotransferase</keyword>
<keyword id="KW-0378">Hydrolase</keyword>
<keyword id="KW-0456">Lyase</keyword>
<keyword id="KW-0663">Pyridoxal phosphate</keyword>
<comment type="function">
    <text evidence="1">Catalyzes the hydrolysis of glutamine to glutamate and ammonia as part of the biosynthesis of pyridoxal 5'-phosphate. The resulting ammonia molecule is channeled to the active site of PdxS.</text>
</comment>
<comment type="catalytic activity">
    <reaction evidence="1">
        <text>aldehydo-D-ribose 5-phosphate + D-glyceraldehyde 3-phosphate + L-glutamine = pyridoxal 5'-phosphate + L-glutamate + phosphate + 3 H2O + H(+)</text>
        <dbReference type="Rhea" id="RHEA:31507"/>
        <dbReference type="ChEBI" id="CHEBI:15377"/>
        <dbReference type="ChEBI" id="CHEBI:15378"/>
        <dbReference type="ChEBI" id="CHEBI:29985"/>
        <dbReference type="ChEBI" id="CHEBI:43474"/>
        <dbReference type="ChEBI" id="CHEBI:58273"/>
        <dbReference type="ChEBI" id="CHEBI:58359"/>
        <dbReference type="ChEBI" id="CHEBI:59776"/>
        <dbReference type="ChEBI" id="CHEBI:597326"/>
        <dbReference type="EC" id="4.3.3.6"/>
    </reaction>
</comment>
<comment type="catalytic activity">
    <reaction evidence="1">
        <text>L-glutamine + H2O = L-glutamate + NH4(+)</text>
        <dbReference type="Rhea" id="RHEA:15889"/>
        <dbReference type="ChEBI" id="CHEBI:15377"/>
        <dbReference type="ChEBI" id="CHEBI:28938"/>
        <dbReference type="ChEBI" id="CHEBI:29985"/>
        <dbReference type="ChEBI" id="CHEBI:58359"/>
        <dbReference type="EC" id="3.5.1.2"/>
    </reaction>
</comment>
<comment type="pathway">
    <text evidence="1">Cofactor biosynthesis; pyridoxal 5'-phosphate biosynthesis.</text>
</comment>
<comment type="subunit">
    <text evidence="1">In the presence of PdxS, forms a dodecamer of heterodimers. Only shows activity in the heterodimer.</text>
</comment>
<comment type="similarity">
    <text evidence="1">Belongs to the glutaminase PdxT/SNO family.</text>
</comment>
<accession>A6VHR9</accession>
<dbReference type="EC" id="4.3.3.6" evidence="1"/>
<dbReference type="EC" id="3.5.1.2" evidence="1"/>
<dbReference type="EMBL" id="CP000745">
    <property type="protein sequence ID" value="ABR65995.1"/>
    <property type="molecule type" value="Genomic_DNA"/>
</dbReference>
<dbReference type="SMR" id="A6VHR9"/>
<dbReference type="STRING" id="426368.MmarC7_0928"/>
<dbReference type="KEGG" id="mmz:MmarC7_0928"/>
<dbReference type="eggNOG" id="arCOG00034">
    <property type="taxonomic scope" value="Archaea"/>
</dbReference>
<dbReference type="HOGENOM" id="CLU_069674_2_0_2"/>
<dbReference type="OrthoDB" id="26717at2157"/>
<dbReference type="UniPathway" id="UPA00245"/>
<dbReference type="GO" id="GO:0005829">
    <property type="term" value="C:cytosol"/>
    <property type="evidence" value="ECO:0007669"/>
    <property type="project" value="TreeGrafter"/>
</dbReference>
<dbReference type="GO" id="GO:1903600">
    <property type="term" value="C:glutaminase complex"/>
    <property type="evidence" value="ECO:0007669"/>
    <property type="project" value="TreeGrafter"/>
</dbReference>
<dbReference type="GO" id="GO:0004359">
    <property type="term" value="F:glutaminase activity"/>
    <property type="evidence" value="ECO:0007669"/>
    <property type="project" value="UniProtKB-UniRule"/>
</dbReference>
<dbReference type="GO" id="GO:0036381">
    <property type="term" value="F:pyridoxal 5'-phosphate synthase (glutamine hydrolysing) activity"/>
    <property type="evidence" value="ECO:0007669"/>
    <property type="project" value="UniProtKB-UniRule"/>
</dbReference>
<dbReference type="GO" id="GO:0006543">
    <property type="term" value="P:glutamine catabolic process"/>
    <property type="evidence" value="ECO:0007669"/>
    <property type="project" value="UniProtKB-UniRule"/>
</dbReference>
<dbReference type="GO" id="GO:0042823">
    <property type="term" value="P:pyridoxal phosphate biosynthetic process"/>
    <property type="evidence" value="ECO:0007669"/>
    <property type="project" value="UniProtKB-UniRule"/>
</dbReference>
<dbReference type="GO" id="GO:0008614">
    <property type="term" value="P:pyridoxine metabolic process"/>
    <property type="evidence" value="ECO:0007669"/>
    <property type="project" value="TreeGrafter"/>
</dbReference>
<dbReference type="CDD" id="cd01749">
    <property type="entry name" value="GATase1_PB"/>
    <property type="match status" value="1"/>
</dbReference>
<dbReference type="FunFam" id="3.40.50.880:FF:000010">
    <property type="entry name" value="uncharacterized protein LOC100176842 isoform X2"/>
    <property type="match status" value="1"/>
</dbReference>
<dbReference type="Gene3D" id="3.40.50.880">
    <property type="match status" value="1"/>
</dbReference>
<dbReference type="HAMAP" id="MF_01615">
    <property type="entry name" value="PdxT"/>
    <property type="match status" value="1"/>
</dbReference>
<dbReference type="InterPro" id="IPR029062">
    <property type="entry name" value="Class_I_gatase-like"/>
</dbReference>
<dbReference type="InterPro" id="IPR002161">
    <property type="entry name" value="PdxT/SNO"/>
</dbReference>
<dbReference type="InterPro" id="IPR021196">
    <property type="entry name" value="PdxT/SNO_CS"/>
</dbReference>
<dbReference type="NCBIfam" id="TIGR03800">
    <property type="entry name" value="PLP_synth_Pdx2"/>
    <property type="match status" value="1"/>
</dbReference>
<dbReference type="PANTHER" id="PTHR31559">
    <property type="entry name" value="PYRIDOXAL 5'-PHOSPHATE SYNTHASE SUBUNIT SNO"/>
    <property type="match status" value="1"/>
</dbReference>
<dbReference type="PANTHER" id="PTHR31559:SF0">
    <property type="entry name" value="PYRIDOXAL 5'-PHOSPHATE SYNTHASE SUBUNIT SNO1-RELATED"/>
    <property type="match status" value="1"/>
</dbReference>
<dbReference type="Pfam" id="PF01174">
    <property type="entry name" value="SNO"/>
    <property type="match status" value="1"/>
</dbReference>
<dbReference type="PIRSF" id="PIRSF005639">
    <property type="entry name" value="Glut_amidoT_SNO"/>
    <property type="match status" value="1"/>
</dbReference>
<dbReference type="SUPFAM" id="SSF52317">
    <property type="entry name" value="Class I glutamine amidotransferase-like"/>
    <property type="match status" value="1"/>
</dbReference>
<dbReference type="PROSITE" id="PS01236">
    <property type="entry name" value="PDXT_SNO_1"/>
    <property type="match status" value="1"/>
</dbReference>
<dbReference type="PROSITE" id="PS51130">
    <property type="entry name" value="PDXT_SNO_2"/>
    <property type="match status" value="1"/>
</dbReference>
<gene>
    <name evidence="1" type="primary">pdxT</name>
    <name type="ordered locus">MmarC7_0928</name>
</gene>
<proteinExistence type="inferred from homology"/>
<feature type="chain" id="PRO_1000069464" description="Pyridoxal 5'-phosphate synthase subunit PdxT">
    <location>
        <begin position="1"/>
        <end position="187"/>
    </location>
</feature>
<feature type="active site" description="Nucleophile" evidence="1">
    <location>
        <position position="76"/>
    </location>
</feature>
<feature type="active site" description="Charge relay system" evidence="1">
    <location>
        <position position="165"/>
    </location>
</feature>
<feature type="active site" description="Charge relay system" evidence="1">
    <location>
        <position position="167"/>
    </location>
</feature>
<feature type="binding site" evidence="1">
    <location>
        <begin position="47"/>
        <end position="49"/>
    </location>
    <ligand>
        <name>L-glutamine</name>
        <dbReference type="ChEBI" id="CHEBI:58359"/>
    </ligand>
</feature>
<feature type="binding site" evidence="1">
    <location>
        <position position="102"/>
    </location>
    <ligand>
        <name>L-glutamine</name>
        <dbReference type="ChEBI" id="CHEBI:58359"/>
    </ligand>
</feature>
<feature type="binding site" evidence="1">
    <location>
        <begin position="128"/>
        <end position="129"/>
    </location>
    <ligand>
        <name>L-glutamine</name>
        <dbReference type="ChEBI" id="CHEBI:58359"/>
    </ligand>
</feature>
<reference key="1">
    <citation type="submission" date="2007-06" db="EMBL/GenBank/DDBJ databases">
        <title>Complete sequence of Methanococcus maripaludis C7.</title>
        <authorList>
            <consortium name="US DOE Joint Genome Institute"/>
            <person name="Copeland A."/>
            <person name="Lucas S."/>
            <person name="Lapidus A."/>
            <person name="Barry K."/>
            <person name="Glavina del Rio T."/>
            <person name="Dalin E."/>
            <person name="Tice H."/>
            <person name="Pitluck S."/>
            <person name="Clum A."/>
            <person name="Schmutz J."/>
            <person name="Larimer F."/>
            <person name="Land M."/>
            <person name="Hauser L."/>
            <person name="Kyrpides N."/>
            <person name="Anderson I."/>
            <person name="Sieprawska-Lupa M."/>
            <person name="Whitman W.B."/>
            <person name="Richardson P."/>
        </authorList>
    </citation>
    <scope>NUCLEOTIDE SEQUENCE [LARGE SCALE GENOMIC DNA]</scope>
    <source>
        <strain>C7 / ATCC BAA-1331</strain>
    </source>
</reference>
<organism>
    <name type="scientific">Methanococcus maripaludis (strain C7 / ATCC BAA-1331)</name>
    <dbReference type="NCBI Taxonomy" id="426368"/>
    <lineage>
        <taxon>Archaea</taxon>
        <taxon>Methanobacteriati</taxon>
        <taxon>Methanobacteriota</taxon>
        <taxon>Methanomada group</taxon>
        <taxon>Methanococci</taxon>
        <taxon>Methanococcales</taxon>
        <taxon>Methanococcaceae</taxon>
        <taxon>Methanococcus</taxon>
    </lineage>
</organism>
<name>PDXT_METM7</name>
<sequence>MKIMGILGIQGDLEEHEDAVRKVNCIPKRIRTVDDLDGIDALIIPGGESTTIGKLMVSYGFIDKIRNLKIPILGTCAGMVLLSKGTGKEQPLLEMLNVTIKRNAYGSQKDSFEKEIVLGGKKVHAVFIRAPQVGEILSKDVEIISKDDGNIVGVKEGNIMAISFHPELSEDGVIVYEYFLKNFVEKN</sequence>